<name>EX7S_CLOB6</name>
<sequence>MGRKKESFENMLEKLETIVDSMDNGEITLEDSMKSYEEGIKLCNKLYKVLKDAEGKIKILEDNKEEDFENS</sequence>
<reference key="1">
    <citation type="submission" date="2008-05" db="EMBL/GenBank/DDBJ databases">
        <title>Genome sequence of Clostridium botulinum Ba4 strain 657.</title>
        <authorList>
            <person name="Shrivastava S."/>
            <person name="Brown J.L."/>
            <person name="Bruce D."/>
            <person name="Detter C."/>
            <person name="Munk C."/>
            <person name="Smith L.A."/>
            <person name="Smith T.J."/>
            <person name="Sutton G."/>
            <person name="Brettin T.S."/>
        </authorList>
    </citation>
    <scope>NUCLEOTIDE SEQUENCE [LARGE SCALE GENOMIC DNA]</scope>
    <source>
        <strain>657 / Type Ba4</strain>
    </source>
</reference>
<organism>
    <name type="scientific">Clostridium botulinum (strain 657 / Type Ba4)</name>
    <dbReference type="NCBI Taxonomy" id="515621"/>
    <lineage>
        <taxon>Bacteria</taxon>
        <taxon>Bacillati</taxon>
        <taxon>Bacillota</taxon>
        <taxon>Clostridia</taxon>
        <taxon>Eubacteriales</taxon>
        <taxon>Clostridiaceae</taxon>
        <taxon>Clostridium</taxon>
    </lineage>
</organism>
<proteinExistence type="inferred from homology"/>
<accession>C3KXC5</accession>
<gene>
    <name evidence="1" type="primary">xseB</name>
    <name type="ordered locus">CLJ_B2071</name>
</gene>
<keyword id="KW-0963">Cytoplasm</keyword>
<keyword id="KW-0269">Exonuclease</keyword>
<keyword id="KW-0378">Hydrolase</keyword>
<keyword id="KW-0540">Nuclease</keyword>
<protein>
    <recommendedName>
        <fullName evidence="1">Exodeoxyribonuclease 7 small subunit</fullName>
        <ecNumber evidence="1">3.1.11.6</ecNumber>
    </recommendedName>
    <alternativeName>
        <fullName evidence="1">Exodeoxyribonuclease VII small subunit</fullName>
        <shortName evidence="1">Exonuclease VII small subunit</shortName>
    </alternativeName>
</protein>
<dbReference type="EC" id="3.1.11.6" evidence="1"/>
<dbReference type="EMBL" id="CP001083">
    <property type="protein sequence ID" value="ACQ52945.1"/>
    <property type="molecule type" value="Genomic_DNA"/>
</dbReference>
<dbReference type="RefSeq" id="WP_003362517.1">
    <property type="nucleotide sequence ID" value="NC_012658.1"/>
</dbReference>
<dbReference type="SMR" id="C3KXC5"/>
<dbReference type="KEGG" id="cbi:CLJ_B2071"/>
<dbReference type="HOGENOM" id="CLU_145918_3_2_9"/>
<dbReference type="Proteomes" id="UP000002333">
    <property type="component" value="Chromosome"/>
</dbReference>
<dbReference type="GO" id="GO:0005829">
    <property type="term" value="C:cytosol"/>
    <property type="evidence" value="ECO:0007669"/>
    <property type="project" value="TreeGrafter"/>
</dbReference>
<dbReference type="GO" id="GO:0009318">
    <property type="term" value="C:exodeoxyribonuclease VII complex"/>
    <property type="evidence" value="ECO:0007669"/>
    <property type="project" value="InterPro"/>
</dbReference>
<dbReference type="GO" id="GO:0008855">
    <property type="term" value="F:exodeoxyribonuclease VII activity"/>
    <property type="evidence" value="ECO:0007669"/>
    <property type="project" value="UniProtKB-UniRule"/>
</dbReference>
<dbReference type="GO" id="GO:0006308">
    <property type="term" value="P:DNA catabolic process"/>
    <property type="evidence" value="ECO:0007669"/>
    <property type="project" value="UniProtKB-UniRule"/>
</dbReference>
<dbReference type="FunFam" id="1.10.287.1040:FF:000010">
    <property type="entry name" value="Exodeoxyribonuclease 7 small subunit"/>
    <property type="match status" value="1"/>
</dbReference>
<dbReference type="Gene3D" id="1.10.287.1040">
    <property type="entry name" value="Exonuclease VII, small subunit"/>
    <property type="match status" value="1"/>
</dbReference>
<dbReference type="HAMAP" id="MF_00337">
    <property type="entry name" value="Exonuc_7_S"/>
    <property type="match status" value="1"/>
</dbReference>
<dbReference type="InterPro" id="IPR003761">
    <property type="entry name" value="Exonuc_VII_S"/>
</dbReference>
<dbReference type="InterPro" id="IPR037004">
    <property type="entry name" value="Exonuc_VII_ssu_sf"/>
</dbReference>
<dbReference type="NCBIfam" id="NF002140">
    <property type="entry name" value="PRK00977.1-4"/>
    <property type="match status" value="1"/>
</dbReference>
<dbReference type="NCBIfam" id="TIGR01280">
    <property type="entry name" value="xseB"/>
    <property type="match status" value="1"/>
</dbReference>
<dbReference type="PANTHER" id="PTHR34137">
    <property type="entry name" value="EXODEOXYRIBONUCLEASE 7 SMALL SUBUNIT"/>
    <property type="match status" value="1"/>
</dbReference>
<dbReference type="PANTHER" id="PTHR34137:SF1">
    <property type="entry name" value="EXODEOXYRIBONUCLEASE 7 SMALL SUBUNIT"/>
    <property type="match status" value="1"/>
</dbReference>
<dbReference type="Pfam" id="PF02609">
    <property type="entry name" value="Exonuc_VII_S"/>
    <property type="match status" value="1"/>
</dbReference>
<dbReference type="PIRSF" id="PIRSF006488">
    <property type="entry name" value="Exonuc_VII_S"/>
    <property type="match status" value="1"/>
</dbReference>
<dbReference type="SUPFAM" id="SSF116842">
    <property type="entry name" value="XseB-like"/>
    <property type="match status" value="1"/>
</dbReference>
<feature type="chain" id="PRO_1000205217" description="Exodeoxyribonuclease 7 small subunit">
    <location>
        <begin position="1"/>
        <end position="71"/>
    </location>
</feature>
<comment type="function">
    <text evidence="1">Bidirectionally degrades single-stranded DNA into large acid-insoluble oligonucleotides, which are then degraded further into small acid-soluble oligonucleotides.</text>
</comment>
<comment type="catalytic activity">
    <reaction evidence="1">
        <text>Exonucleolytic cleavage in either 5'- to 3'- or 3'- to 5'-direction to yield nucleoside 5'-phosphates.</text>
        <dbReference type="EC" id="3.1.11.6"/>
    </reaction>
</comment>
<comment type="subunit">
    <text evidence="1">Heterooligomer composed of large and small subunits.</text>
</comment>
<comment type="subcellular location">
    <subcellularLocation>
        <location evidence="1">Cytoplasm</location>
    </subcellularLocation>
</comment>
<comment type="similarity">
    <text evidence="1">Belongs to the XseB family.</text>
</comment>
<evidence type="ECO:0000255" key="1">
    <source>
        <dbReference type="HAMAP-Rule" id="MF_00337"/>
    </source>
</evidence>